<proteinExistence type="inferred from homology"/>
<evidence type="ECO:0000255" key="1">
    <source>
        <dbReference type="HAMAP-Rule" id="MF_02115"/>
    </source>
</evidence>
<keyword id="KW-0067">ATP-binding</keyword>
<keyword id="KW-0274">FAD</keyword>
<keyword id="KW-0285">Flavoprotein</keyword>
<keyword id="KW-0288">FMN</keyword>
<keyword id="KW-0547">Nucleotide-binding</keyword>
<keyword id="KW-0548">Nucleotidyltransferase</keyword>
<keyword id="KW-0808">Transferase</keyword>
<reference key="1">
    <citation type="submission" date="2009-10" db="EMBL/GenBank/DDBJ databases">
        <title>Complete sequence of chromosome of Methanocaldococcus vulcanius M7.</title>
        <authorList>
            <consortium name="US DOE Joint Genome Institute"/>
            <person name="Lucas S."/>
            <person name="Copeland A."/>
            <person name="Lapidus A."/>
            <person name="Glavina del Rio T."/>
            <person name="Dalin E."/>
            <person name="Tice H."/>
            <person name="Bruce D."/>
            <person name="Goodwin L."/>
            <person name="Pitluck S."/>
            <person name="Lcollab F.I."/>
            <person name="Brettin T."/>
            <person name="Detter J.C."/>
            <person name="Han C."/>
            <person name="Tapia R."/>
            <person name="Kuske C.R."/>
            <person name="Schmutz J."/>
            <person name="Larimer F."/>
            <person name="Land M."/>
            <person name="Hauser L."/>
            <person name="Kyrpides N."/>
            <person name="Ovchinikova G."/>
            <person name="Sieprawska-Lupa M."/>
            <person name="Whitman W.B."/>
            <person name="Woyke T."/>
        </authorList>
    </citation>
    <scope>NUCLEOTIDE SEQUENCE [LARGE SCALE GENOMIC DNA]</scope>
    <source>
        <strain>ATCC 700851 / DSM 12094 / M7</strain>
    </source>
</reference>
<gene>
    <name evidence="1" type="primary">ribL</name>
    <name type="ordered locus">Metvu_0383</name>
</gene>
<accession>C9RF94</accession>
<feature type="chain" id="PRO_0000406250" description="FAD synthase">
    <location>
        <begin position="1"/>
        <end position="152"/>
    </location>
</feature>
<feature type="binding site" evidence="1">
    <location>
        <begin position="16"/>
        <end position="17"/>
    </location>
    <ligand>
        <name>ATP</name>
        <dbReference type="ChEBI" id="CHEBI:30616"/>
    </ligand>
</feature>
<feature type="binding site" evidence="1">
    <location>
        <begin position="21"/>
        <end position="24"/>
    </location>
    <ligand>
        <name>ATP</name>
        <dbReference type="ChEBI" id="CHEBI:30616"/>
    </ligand>
</feature>
<feature type="binding site" evidence="1">
    <location>
        <position position="101"/>
    </location>
    <ligand>
        <name>ATP</name>
        <dbReference type="ChEBI" id="CHEBI:30616"/>
    </ligand>
</feature>
<feature type="binding site" evidence="1">
    <location>
        <position position="129"/>
    </location>
    <ligand>
        <name>ATP</name>
        <dbReference type="ChEBI" id="CHEBI:30616"/>
    </ligand>
</feature>
<comment type="function">
    <text evidence="1">Catalyzes the transfer of the AMP portion of ATP to flavin mononucleotide (FMN) to produce flavin adenine dinucleotide (FAD) coenzyme.</text>
</comment>
<comment type="catalytic activity">
    <reaction evidence="1">
        <text>FMN + ATP + H(+) = FAD + diphosphate</text>
        <dbReference type="Rhea" id="RHEA:17237"/>
        <dbReference type="ChEBI" id="CHEBI:15378"/>
        <dbReference type="ChEBI" id="CHEBI:30616"/>
        <dbReference type="ChEBI" id="CHEBI:33019"/>
        <dbReference type="ChEBI" id="CHEBI:57692"/>
        <dbReference type="ChEBI" id="CHEBI:58210"/>
        <dbReference type="EC" id="2.7.7.2"/>
    </reaction>
</comment>
<comment type="cofactor">
    <cofactor evidence="1">
        <name>a divalent metal cation</name>
        <dbReference type="ChEBI" id="CHEBI:60240"/>
    </cofactor>
</comment>
<comment type="pathway">
    <text evidence="1">Cofactor biosynthesis; FAD biosynthesis; FAD from FMN: step 1/1.</text>
</comment>
<comment type="subunit">
    <text evidence="1">Homodimer.</text>
</comment>
<comment type="similarity">
    <text evidence="1">Belongs to the archaeal FAD synthase family.</text>
</comment>
<organism>
    <name type="scientific">Methanocaldococcus vulcanius (strain ATCC 700851 / DSM 12094 / M7)</name>
    <name type="common">Methanococcus vulcanius</name>
    <dbReference type="NCBI Taxonomy" id="579137"/>
    <lineage>
        <taxon>Archaea</taxon>
        <taxon>Methanobacteriati</taxon>
        <taxon>Methanobacteriota</taxon>
        <taxon>Methanomada group</taxon>
        <taxon>Methanococci</taxon>
        <taxon>Methanococcales</taxon>
        <taxon>Methanocaldococcaceae</taxon>
        <taxon>Methanocaldococcus</taxon>
    </lineage>
</organism>
<sequence length="152" mass="17740">MEKDRNVKKRVITAGTFDILHPGHYEILKFAKSLGDELIVIIARDKTVERLKGRKPIIPENQRREMVEALKPVDKAILGSLNNKLEPILKLKPDIIVLGPDQMTFDEETLKKELEKHNLHPKIVRFKNYKKCPFHSSFDIVKEIVKRYCNKE</sequence>
<protein>
    <recommendedName>
        <fullName evidence="1">FAD synthase</fullName>
        <ecNumber evidence="1">2.7.7.2</ecNumber>
    </recommendedName>
    <alternativeName>
        <fullName evidence="1">FMN adenylyltransferase</fullName>
    </alternativeName>
    <alternativeName>
        <fullName evidence="1">Flavin adenine dinucleotide synthase</fullName>
    </alternativeName>
</protein>
<dbReference type="EC" id="2.7.7.2" evidence="1"/>
<dbReference type="EMBL" id="CP001787">
    <property type="protein sequence ID" value="ACX72246.1"/>
    <property type="molecule type" value="Genomic_DNA"/>
</dbReference>
<dbReference type="RefSeq" id="WP_012819790.1">
    <property type="nucleotide sequence ID" value="NC_013407.1"/>
</dbReference>
<dbReference type="SMR" id="C9RF94"/>
<dbReference type="STRING" id="579137.Metvu_0383"/>
<dbReference type="GeneID" id="8512715"/>
<dbReference type="KEGG" id="mvu:Metvu_0383"/>
<dbReference type="eggNOG" id="arCOG01222">
    <property type="taxonomic scope" value="Archaea"/>
</dbReference>
<dbReference type="HOGENOM" id="CLU_034585_2_1_2"/>
<dbReference type="OrthoDB" id="1912at2157"/>
<dbReference type="UniPathway" id="UPA00277">
    <property type="reaction ID" value="UER00407"/>
</dbReference>
<dbReference type="Proteomes" id="UP000002063">
    <property type="component" value="Chromosome"/>
</dbReference>
<dbReference type="GO" id="GO:0005524">
    <property type="term" value="F:ATP binding"/>
    <property type="evidence" value="ECO:0007669"/>
    <property type="project" value="UniProtKB-UniRule"/>
</dbReference>
<dbReference type="GO" id="GO:0003919">
    <property type="term" value="F:FMN adenylyltransferase activity"/>
    <property type="evidence" value="ECO:0007669"/>
    <property type="project" value="UniProtKB-UniRule"/>
</dbReference>
<dbReference type="GO" id="GO:0006747">
    <property type="term" value="P:FAD biosynthetic process"/>
    <property type="evidence" value="ECO:0007669"/>
    <property type="project" value="UniProtKB-UniRule"/>
</dbReference>
<dbReference type="GO" id="GO:0046444">
    <property type="term" value="P:FMN metabolic process"/>
    <property type="evidence" value="ECO:0007669"/>
    <property type="project" value="UniProtKB-UniRule"/>
</dbReference>
<dbReference type="CDD" id="cd02170">
    <property type="entry name" value="cytidylyltransferase"/>
    <property type="match status" value="1"/>
</dbReference>
<dbReference type="Gene3D" id="3.40.50.620">
    <property type="entry name" value="HUPs"/>
    <property type="match status" value="1"/>
</dbReference>
<dbReference type="HAMAP" id="MF_02115">
    <property type="entry name" value="FAD_synth_arch"/>
    <property type="match status" value="1"/>
</dbReference>
<dbReference type="InterPro" id="IPR050385">
    <property type="entry name" value="Archaeal_FAD_synthase"/>
</dbReference>
<dbReference type="InterPro" id="IPR004821">
    <property type="entry name" value="Cyt_trans-like"/>
</dbReference>
<dbReference type="InterPro" id="IPR024902">
    <property type="entry name" value="FAD_synth_RibL"/>
</dbReference>
<dbReference type="InterPro" id="IPR014729">
    <property type="entry name" value="Rossmann-like_a/b/a_fold"/>
</dbReference>
<dbReference type="NCBIfam" id="TIGR00125">
    <property type="entry name" value="cyt_tran_rel"/>
    <property type="match status" value="1"/>
</dbReference>
<dbReference type="PANTHER" id="PTHR43793">
    <property type="entry name" value="FAD SYNTHASE"/>
    <property type="match status" value="1"/>
</dbReference>
<dbReference type="PANTHER" id="PTHR43793:SF1">
    <property type="entry name" value="FAD SYNTHASE"/>
    <property type="match status" value="1"/>
</dbReference>
<dbReference type="Pfam" id="PF01467">
    <property type="entry name" value="CTP_transf_like"/>
    <property type="match status" value="1"/>
</dbReference>
<dbReference type="SUPFAM" id="SSF52374">
    <property type="entry name" value="Nucleotidylyl transferase"/>
    <property type="match status" value="1"/>
</dbReference>
<name>RIBL_METVM</name>